<accession>A7EAY2</accession>
<comment type="function">
    <text evidence="1">ATP-binding RNA helicase involved in the biogenesis of 60S ribosomal subunits and is required for the normal formation of 25S and 5.8S rRNAs.</text>
</comment>
<comment type="catalytic activity">
    <reaction>
        <text>ATP + H2O = ADP + phosphate + H(+)</text>
        <dbReference type="Rhea" id="RHEA:13065"/>
        <dbReference type="ChEBI" id="CHEBI:15377"/>
        <dbReference type="ChEBI" id="CHEBI:15378"/>
        <dbReference type="ChEBI" id="CHEBI:30616"/>
        <dbReference type="ChEBI" id="CHEBI:43474"/>
        <dbReference type="ChEBI" id="CHEBI:456216"/>
        <dbReference type="EC" id="3.6.4.13"/>
    </reaction>
</comment>
<comment type="subcellular location">
    <subcellularLocation>
        <location evidence="1">Nucleus</location>
        <location evidence="1">Nucleolus</location>
    </subcellularLocation>
</comment>
<comment type="domain">
    <text>The Q motif is unique to and characteristic of the DEAD box family of RNA helicases and controls ATP binding and hydrolysis.</text>
</comment>
<comment type="similarity">
    <text evidence="5">Belongs to the DEAD box helicase family. DDX24/MAK5 subfamily.</text>
</comment>
<keyword id="KW-0067">ATP-binding</keyword>
<keyword id="KW-0347">Helicase</keyword>
<keyword id="KW-0378">Hydrolase</keyword>
<keyword id="KW-0547">Nucleotide-binding</keyword>
<keyword id="KW-0539">Nucleus</keyword>
<keyword id="KW-1185">Reference proteome</keyword>
<keyword id="KW-0690">Ribosome biogenesis</keyword>
<keyword id="KW-0694">RNA-binding</keyword>
<keyword id="KW-0698">rRNA processing</keyword>
<organism>
    <name type="scientific">Sclerotinia sclerotiorum (strain ATCC 18683 / 1980 / Ss-1)</name>
    <name type="common">White mold</name>
    <name type="synonym">Whetzelinia sclerotiorum</name>
    <dbReference type="NCBI Taxonomy" id="665079"/>
    <lineage>
        <taxon>Eukaryota</taxon>
        <taxon>Fungi</taxon>
        <taxon>Dikarya</taxon>
        <taxon>Ascomycota</taxon>
        <taxon>Pezizomycotina</taxon>
        <taxon>Leotiomycetes</taxon>
        <taxon>Helotiales</taxon>
        <taxon>Sclerotiniaceae</taxon>
        <taxon>Sclerotinia</taxon>
    </lineage>
</organism>
<evidence type="ECO:0000250" key="1"/>
<evidence type="ECO:0000255" key="2">
    <source>
        <dbReference type="PROSITE-ProRule" id="PRU00541"/>
    </source>
</evidence>
<evidence type="ECO:0000255" key="3">
    <source>
        <dbReference type="PROSITE-ProRule" id="PRU00542"/>
    </source>
</evidence>
<evidence type="ECO:0000256" key="4">
    <source>
        <dbReference type="SAM" id="MobiDB-lite"/>
    </source>
</evidence>
<evidence type="ECO:0000305" key="5"/>
<name>MAK5_SCLS1</name>
<proteinExistence type="inferred from homology"/>
<reference key="1">
    <citation type="journal article" date="2011" name="PLoS Genet.">
        <title>Genomic analysis of the necrotrophic fungal pathogens Sclerotinia sclerotiorum and Botrytis cinerea.</title>
        <authorList>
            <person name="Amselem J."/>
            <person name="Cuomo C.A."/>
            <person name="van Kan J.A.L."/>
            <person name="Viaud M."/>
            <person name="Benito E.P."/>
            <person name="Couloux A."/>
            <person name="Coutinho P.M."/>
            <person name="de Vries R.P."/>
            <person name="Dyer P.S."/>
            <person name="Fillinger S."/>
            <person name="Fournier E."/>
            <person name="Gout L."/>
            <person name="Hahn M."/>
            <person name="Kohn L."/>
            <person name="Lapalu N."/>
            <person name="Plummer K.M."/>
            <person name="Pradier J.-M."/>
            <person name="Quevillon E."/>
            <person name="Sharon A."/>
            <person name="Simon A."/>
            <person name="ten Have A."/>
            <person name="Tudzynski B."/>
            <person name="Tudzynski P."/>
            <person name="Wincker P."/>
            <person name="Andrew M."/>
            <person name="Anthouard V."/>
            <person name="Beever R.E."/>
            <person name="Beffa R."/>
            <person name="Benoit I."/>
            <person name="Bouzid O."/>
            <person name="Brault B."/>
            <person name="Chen Z."/>
            <person name="Choquer M."/>
            <person name="Collemare J."/>
            <person name="Cotton P."/>
            <person name="Danchin E.G."/>
            <person name="Da Silva C."/>
            <person name="Gautier A."/>
            <person name="Giraud C."/>
            <person name="Giraud T."/>
            <person name="Gonzalez C."/>
            <person name="Grossetete S."/>
            <person name="Gueldener U."/>
            <person name="Henrissat B."/>
            <person name="Howlett B.J."/>
            <person name="Kodira C."/>
            <person name="Kretschmer M."/>
            <person name="Lappartient A."/>
            <person name="Leroch M."/>
            <person name="Levis C."/>
            <person name="Mauceli E."/>
            <person name="Neuveglise C."/>
            <person name="Oeser B."/>
            <person name="Pearson M."/>
            <person name="Poulain J."/>
            <person name="Poussereau N."/>
            <person name="Quesneville H."/>
            <person name="Rascle C."/>
            <person name="Schumacher J."/>
            <person name="Segurens B."/>
            <person name="Sexton A."/>
            <person name="Silva E."/>
            <person name="Sirven C."/>
            <person name="Soanes D.M."/>
            <person name="Talbot N.J."/>
            <person name="Templeton M."/>
            <person name="Yandava C."/>
            <person name="Yarden O."/>
            <person name="Zeng Q."/>
            <person name="Rollins J.A."/>
            <person name="Lebrun M.-H."/>
            <person name="Dickman M."/>
        </authorList>
    </citation>
    <scope>NUCLEOTIDE SEQUENCE [LARGE SCALE GENOMIC DNA]</scope>
    <source>
        <strain>ATCC 18683 / 1980 / Ss-1</strain>
    </source>
</reference>
<dbReference type="EC" id="3.6.4.13"/>
<dbReference type="EMBL" id="CH476623">
    <property type="protein sequence ID" value="EDN99610.1"/>
    <property type="molecule type" value="Genomic_DNA"/>
</dbReference>
<dbReference type="RefSeq" id="XP_001596248.1">
    <property type="nucleotide sequence ID" value="XM_001596198.1"/>
</dbReference>
<dbReference type="SMR" id="A7EAY2"/>
<dbReference type="FunCoup" id="A7EAY2">
    <property type="interactions" value="898"/>
</dbReference>
<dbReference type="STRING" id="665079.A7EAY2"/>
<dbReference type="EnsemblFungi" id="EDN99610">
    <property type="protein sequence ID" value="EDN99610"/>
    <property type="gene ID" value="SS1G_02468"/>
</dbReference>
<dbReference type="GeneID" id="5492605"/>
<dbReference type="KEGG" id="ssl:SS1G_02468"/>
<dbReference type="VEuPathDB" id="FungiDB:sscle_04g034850"/>
<dbReference type="eggNOG" id="KOG0347">
    <property type="taxonomic scope" value="Eukaryota"/>
</dbReference>
<dbReference type="HOGENOM" id="CLU_003041_13_0_1"/>
<dbReference type="InParanoid" id="A7EAY2"/>
<dbReference type="OMA" id="QMIQKAR"/>
<dbReference type="OrthoDB" id="4310724at2759"/>
<dbReference type="Proteomes" id="UP000001312">
    <property type="component" value="Unassembled WGS sequence"/>
</dbReference>
<dbReference type="GO" id="GO:0005730">
    <property type="term" value="C:nucleolus"/>
    <property type="evidence" value="ECO:0000318"/>
    <property type="project" value="GO_Central"/>
</dbReference>
<dbReference type="GO" id="GO:0005524">
    <property type="term" value="F:ATP binding"/>
    <property type="evidence" value="ECO:0007669"/>
    <property type="project" value="UniProtKB-KW"/>
</dbReference>
<dbReference type="GO" id="GO:0016887">
    <property type="term" value="F:ATP hydrolysis activity"/>
    <property type="evidence" value="ECO:0007669"/>
    <property type="project" value="RHEA"/>
</dbReference>
<dbReference type="GO" id="GO:0003723">
    <property type="term" value="F:RNA binding"/>
    <property type="evidence" value="ECO:0007669"/>
    <property type="project" value="UniProtKB-KW"/>
</dbReference>
<dbReference type="GO" id="GO:0003724">
    <property type="term" value="F:RNA helicase activity"/>
    <property type="evidence" value="ECO:0007669"/>
    <property type="project" value="UniProtKB-EC"/>
</dbReference>
<dbReference type="GO" id="GO:0006364">
    <property type="term" value="P:rRNA processing"/>
    <property type="evidence" value="ECO:0007669"/>
    <property type="project" value="UniProtKB-KW"/>
</dbReference>
<dbReference type="CDD" id="cd17946">
    <property type="entry name" value="DEADc_DDX24"/>
    <property type="match status" value="1"/>
</dbReference>
<dbReference type="CDD" id="cd18787">
    <property type="entry name" value="SF2_C_DEAD"/>
    <property type="match status" value="1"/>
</dbReference>
<dbReference type="Gene3D" id="3.40.50.300">
    <property type="entry name" value="P-loop containing nucleotide triphosphate hydrolases"/>
    <property type="match status" value="2"/>
</dbReference>
<dbReference type="InterPro" id="IPR011545">
    <property type="entry name" value="DEAD/DEAH_box_helicase_dom"/>
</dbReference>
<dbReference type="InterPro" id="IPR014001">
    <property type="entry name" value="Helicase_ATP-bd"/>
</dbReference>
<dbReference type="InterPro" id="IPR001650">
    <property type="entry name" value="Helicase_C-like"/>
</dbReference>
<dbReference type="InterPro" id="IPR027417">
    <property type="entry name" value="P-loop_NTPase"/>
</dbReference>
<dbReference type="InterPro" id="IPR000629">
    <property type="entry name" value="RNA-helicase_DEAD-box_CS"/>
</dbReference>
<dbReference type="InterPro" id="IPR014014">
    <property type="entry name" value="RNA_helicase_DEAD_Q_motif"/>
</dbReference>
<dbReference type="PANTHER" id="PTHR24031">
    <property type="entry name" value="RNA HELICASE"/>
    <property type="match status" value="1"/>
</dbReference>
<dbReference type="Pfam" id="PF00270">
    <property type="entry name" value="DEAD"/>
    <property type="match status" value="1"/>
</dbReference>
<dbReference type="Pfam" id="PF00271">
    <property type="entry name" value="Helicase_C"/>
    <property type="match status" value="1"/>
</dbReference>
<dbReference type="SMART" id="SM00487">
    <property type="entry name" value="DEXDc"/>
    <property type="match status" value="1"/>
</dbReference>
<dbReference type="SMART" id="SM00490">
    <property type="entry name" value="HELICc"/>
    <property type="match status" value="1"/>
</dbReference>
<dbReference type="SUPFAM" id="SSF52540">
    <property type="entry name" value="P-loop containing nucleoside triphosphate hydrolases"/>
    <property type="match status" value="1"/>
</dbReference>
<dbReference type="PROSITE" id="PS00039">
    <property type="entry name" value="DEAD_ATP_HELICASE"/>
    <property type="match status" value="1"/>
</dbReference>
<dbReference type="PROSITE" id="PS51192">
    <property type="entry name" value="HELICASE_ATP_BIND_1"/>
    <property type="match status" value="1"/>
</dbReference>
<dbReference type="PROSITE" id="PS51194">
    <property type="entry name" value="HELICASE_CTER"/>
    <property type="match status" value="1"/>
</dbReference>
<dbReference type="PROSITE" id="PS51195">
    <property type="entry name" value="Q_MOTIF"/>
    <property type="match status" value="1"/>
</dbReference>
<protein>
    <recommendedName>
        <fullName>ATP-dependent RNA helicase mak5</fullName>
        <ecNumber>3.6.4.13</ecNumber>
    </recommendedName>
</protein>
<feature type="chain" id="PRO_0000310210" description="ATP-dependent RNA helicase mak5">
    <location>
        <begin position="1"/>
        <end position="780"/>
    </location>
</feature>
<feature type="domain" description="Helicase ATP-binding" evidence="2">
    <location>
        <begin position="244"/>
        <end position="444"/>
    </location>
</feature>
<feature type="domain" description="Helicase C-terminal" evidence="3">
    <location>
        <begin position="477"/>
        <end position="645"/>
    </location>
</feature>
<feature type="region of interest" description="Disordered" evidence="4">
    <location>
        <begin position="1"/>
        <end position="47"/>
    </location>
</feature>
<feature type="region of interest" description="Disordered" evidence="4">
    <location>
        <begin position="88"/>
        <end position="192"/>
    </location>
</feature>
<feature type="region of interest" description="Disordered" evidence="4">
    <location>
        <begin position="700"/>
        <end position="721"/>
    </location>
</feature>
<feature type="short sequence motif" description="Q motif">
    <location>
        <begin position="213"/>
        <end position="241"/>
    </location>
</feature>
<feature type="short sequence motif" description="DEAD box">
    <location>
        <begin position="378"/>
        <end position="381"/>
    </location>
</feature>
<feature type="compositionally biased region" description="Basic residues" evidence="4">
    <location>
        <begin position="19"/>
        <end position="37"/>
    </location>
</feature>
<feature type="compositionally biased region" description="Acidic residues" evidence="4">
    <location>
        <begin position="94"/>
        <end position="107"/>
    </location>
</feature>
<feature type="compositionally biased region" description="Basic and acidic residues" evidence="4">
    <location>
        <begin position="140"/>
        <end position="157"/>
    </location>
</feature>
<feature type="compositionally biased region" description="Basic and acidic residues" evidence="4">
    <location>
        <begin position="164"/>
        <end position="192"/>
    </location>
</feature>
<feature type="compositionally biased region" description="Basic and acidic residues" evidence="4">
    <location>
        <begin position="712"/>
        <end position="721"/>
    </location>
</feature>
<feature type="binding site" evidence="2">
    <location>
        <begin position="257"/>
        <end position="264"/>
    </location>
    <ligand>
        <name>ATP</name>
        <dbReference type="ChEBI" id="CHEBI:30616"/>
    </ligand>
</feature>
<gene>
    <name type="primary">mak5</name>
    <name type="ORF">SS1G_02468</name>
</gene>
<sequence length="780" mass="86191">MDTKQKKRSHSETNGSQKAPKRQKIQKTSKKQKKAAPKKPVAVDSLPWNEVTMPDMFEDAEGFYGLEEVDDVEVVRDGDVVTFVSSKIQTKNNEDEEFEGFGDEVEDGGNAATDNTGEVKPILKPTEESTKNDVPQGNKQKIEKKAKPEKKDKKEGSNTEEGEEKVPSKKEKKQKQEKPQKQPVDKDATLKQDPLKNVFEALDEDAAGEVEVSGWVELDLSSNTLMALSKMGFSKPTPIQSEAIPEVLAGHDVVGKASTGSGKTLAFGIPIVEKWLEVYGELDEDELKKSTRPPTALILSPTRELAHQLTEHITTLCKGMPTSPYVAAVTGGLSVQKQQRQLSKADIIIGTPGRLWEVISSSNELSAGLKQVRFLVIDEADRLLTDGHFKEAEEILNALDRTHGNEDDDEEDTLPPRQTLVFSATFHKGLQQKLAGKGKQSFKDDSQSMEYLLKKLNFREEKPKFVDVNPISQMAANLKEGMVECGGEEKDLYLYSLLLHHPNQRTLIFTNSIHSVRRLTPMLQTLNIPAHSLHSQMIQKARMRSIEKFSRTNNTGSVLVATDVAARGLDIGGVQLVIHYHLPRTADMYVHRSGRTARAAASGSSILLCGPEEVVGTRRLVAKVHAQNALHGEGKKSKFYIRSLDIDRRVVSRLKPRVTLAKKIADSALAKEKKGHDDDWVKNAAEELGVEYDSEEFEALGGGRKGRGTGRRMKEKEARGMSKGEVGALRAELRALLAQRVNVGVSERYLTSGTVNVNDLLKGAKGEWLGEVEGIGMEDD</sequence>